<organism>
    <name type="scientific">Synechococcus sp. (strain JA-3-3Ab)</name>
    <name type="common">Cyanobacteria bacterium Yellowstone A-Prime</name>
    <dbReference type="NCBI Taxonomy" id="321327"/>
    <lineage>
        <taxon>Bacteria</taxon>
        <taxon>Bacillati</taxon>
        <taxon>Cyanobacteriota</taxon>
        <taxon>Cyanophyceae</taxon>
        <taxon>Synechococcales</taxon>
        <taxon>Synechococcaceae</taxon>
        <taxon>Synechococcus</taxon>
    </lineage>
</organism>
<evidence type="ECO:0000255" key="1">
    <source>
        <dbReference type="HAMAP-Rule" id="MF_00022"/>
    </source>
</evidence>
<feature type="chain" id="PRO_0000237412" description="Glutamate--tRNA ligase">
    <location>
        <begin position="1"/>
        <end position="479"/>
    </location>
</feature>
<feature type="short sequence motif" description="'HIGH' region" evidence="1">
    <location>
        <begin position="9"/>
        <end position="19"/>
    </location>
</feature>
<feature type="short sequence motif" description="'KMSKS' region" evidence="1">
    <location>
        <begin position="243"/>
        <end position="247"/>
    </location>
</feature>
<feature type="binding site" evidence="1">
    <location>
        <position position="246"/>
    </location>
    <ligand>
        <name>ATP</name>
        <dbReference type="ChEBI" id="CHEBI:30616"/>
    </ligand>
</feature>
<name>SYE_SYNJA</name>
<gene>
    <name evidence="1" type="primary">gltX</name>
    <name type="ordered locus">CYA_2715</name>
</gene>
<protein>
    <recommendedName>
        <fullName evidence="1">Glutamate--tRNA ligase</fullName>
        <ecNumber evidence="1">6.1.1.17</ecNumber>
    </recommendedName>
    <alternativeName>
        <fullName evidence="1">Glutamyl-tRNA synthetase</fullName>
        <shortName evidence="1">GluRS</shortName>
    </alternativeName>
</protein>
<dbReference type="EC" id="6.1.1.17" evidence="1"/>
<dbReference type="EMBL" id="CP000239">
    <property type="protein sequence ID" value="ABD00823.1"/>
    <property type="molecule type" value="Genomic_DNA"/>
</dbReference>
<dbReference type="RefSeq" id="WP_011431493.1">
    <property type="nucleotide sequence ID" value="NC_007775.1"/>
</dbReference>
<dbReference type="SMR" id="Q2JRD6"/>
<dbReference type="STRING" id="321327.CYA_2715"/>
<dbReference type="KEGG" id="cya:CYA_2715"/>
<dbReference type="eggNOG" id="COG0008">
    <property type="taxonomic scope" value="Bacteria"/>
</dbReference>
<dbReference type="HOGENOM" id="CLU_015768_6_0_3"/>
<dbReference type="OrthoDB" id="9807503at2"/>
<dbReference type="Proteomes" id="UP000008818">
    <property type="component" value="Chromosome"/>
</dbReference>
<dbReference type="GO" id="GO:0005829">
    <property type="term" value="C:cytosol"/>
    <property type="evidence" value="ECO:0007669"/>
    <property type="project" value="TreeGrafter"/>
</dbReference>
<dbReference type="GO" id="GO:0005524">
    <property type="term" value="F:ATP binding"/>
    <property type="evidence" value="ECO:0007669"/>
    <property type="project" value="UniProtKB-UniRule"/>
</dbReference>
<dbReference type="GO" id="GO:0004818">
    <property type="term" value="F:glutamate-tRNA ligase activity"/>
    <property type="evidence" value="ECO:0007669"/>
    <property type="project" value="UniProtKB-UniRule"/>
</dbReference>
<dbReference type="GO" id="GO:0000049">
    <property type="term" value="F:tRNA binding"/>
    <property type="evidence" value="ECO:0007669"/>
    <property type="project" value="InterPro"/>
</dbReference>
<dbReference type="GO" id="GO:0008270">
    <property type="term" value="F:zinc ion binding"/>
    <property type="evidence" value="ECO:0007669"/>
    <property type="project" value="InterPro"/>
</dbReference>
<dbReference type="GO" id="GO:0006424">
    <property type="term" value="P:glutamyl-tRNA aminoacylation"/>
    <property type="evidence" value="ECO:0007669"/>
    <property type="project" value="UniProtKB-UniRule"/>
</dbReference>
<dbReference type="CDD" id="cd00808">
    <property type="entry name" value="GluRS_core"/>
    <property type="match status" value="1"/>
</dbReference>
<dbReference type="FunFam" id="3.40.50.620:FF:000007">
    <property type="entry name" value="Glutamate--tRNA ligase"/>
    <property type="match status" value="1"/>
</dbReference>
<dbReference type="Gene3D" id="1.10.10.350">
    <property type="match status" value="1"/>
</dbReference>
<dbReference type="Gene3D" id="1.10.8.70">
    <property type="entry name" value="Glutamate-tRNA synthetase, class I, anticodon-binding domain 1"/>
    <property type="match status" value="1"/>
</dbReference>
<dbReference type="Gene3D" id="3.40.50.620">
    <property type="entry name" value="HUPs"/>
    <property type="match status" value="1"/>
</dbReference>
<dbReference type="HAMAP" id="MF_00022">
    <property type="entry name" value="Glu_tRNA_synth_type1"/>
    <property type="match status" value="1"/>
</dbReference>
<dbReference type="InterPro" id="IPR045462">
    <property type="entry name" value="aa-tRNA-synth_I_cd-bd"/>
</dbReference>
<dbReference type="InterPro" id="IPR020751">
    <property type="entry name" value="aa-tRNA-synth_I_codon-bd_sub2"/>
</dbReference>
<dbReference type="InterPro" id="IPR001412">
    <property type="entry name" value="aa-tRNA-synth_I_CS"/>
</dbReference>
<dbReference type="InterPro" id="IPR008925">
    <property type="entry name" value="aa_tRNA-synth_I_cd-bd_sf"/>
</dbReference>
<dbReference type="InterPro" id="IPR004527">
    <property type="entry name" value="Glu-tRNA-ligase_bac/mito"/>
</dbReference>
<dbReference type="InterPro" id="IPR020752">
    <property type="entry name" value="Glu-tRNA-synth_I_codon-bd_sub1"/>
</dbReference>
<dbReference type="InterPro" id="IPR000924">
    <property type="entry name" value="Glu/Gln-tRNA-synth"/>
</dbReference>
<dbReference type="InterPro" id="IPR020058">
    <property type="entry name" value="Glu/Gln-tRNA-synth_Ib_cat-dom"/>
</dbReference>
<dbReference type="InterPro" id="IPR049940">
    <property type="entry name" value="GluQ/Sye"/>
</dbReference>
<dbReference type="InterPro" id="IPR033910">
    <property type="entry name" value="GluRS_core"/>
</dbReference>
<dbReference type="InterPro" id="IPR014729">
    <property type="entry name" value="Rossmann-like_a/b/a_fold"/>
</dbReference>
<dbReference type="NCBIfam" id="TIGR00464">
    <property type="entry name" value="gltX_bact"/>
    <property type="match status" value="1"/>
</dbReference>
<dbReference type="NCBIfam" id="NF004315">
    <property type="entry name" value="PRK05710.1-4"/>
    <property type="match status" value="1"/>
</dbReference>
<dbReference type="PANTHER" id="PTHR43311">
    <property type="entry name" value="GLUTAMATE--TRNA LIGASE"/>
    <property type="match status" value="1"/>
</dbReference>
<dbReference type="PANTHER" id="PTHR43311:SF2">
    <property type="entry name" value="GLUTAMATE--TRNA LIGASE, MITOCHONDRIAL-RELATED"/>
    <property type="match status" value="1"/>
</dbReference>
<dbReference type="Pfam" id="PF19269">
    <property type="entry name" value="Anticodon_2"/>
    <property type="match status" value="1"/>
</dbReference>
<dbReference type="Pfam" id="PF00749">
    <property type="entry name" value="tRNA-synt_1c"/>
    <property type="match status" value="1"/>
</dbReference>
<dbReference type="PRINTS" id="PR00987">
    <property type="entry name" value="TRNASYNTHGLU"/>
</dbReference>
<dbReference type="SUPFAM" id="SSF48163">
    <property type="entry name" value="An anticodon-binding domain of class I aminoacyl-tRNA synthetases"/>
    <property type="match status" value="1"/>
</dbReference>
<dbReference type="SUPFAM" id="SSF52374">
    <property type="entry name" value="Nucleotidylyl transferase"/>
    <property type="match status" value="1"/>
</dbReference>
<dbReference type="PROSITE" id="PS00178">
    <property type="entry name" value="AA_TRNA_LIGASE_I"/>
    <property type="match status" value="1"/>
</dbReference>
<accession>Q2JRD6</accession>
<comment type="function">
    <text evidence="1">Catalyzes the attachment of glutamate to tRNA(Glu) in a two-step reaction: glutamate is first activated by ATP to form Glu-AMP and then transferred to the acceptor end of tRNA(Glu).</text>
</comment>
<comment type="catalytic activity">
    <reaction evidence="1">
        <text>tRNA(Glu) + L-glutamate + ATP = L-glutamyl-tRNA(Glu) + AMP + diphosphate</text>
        <dbReference type="Rhea" id="RHEA:23540"/>
        <dbReference type="Rhea" id="RHEA-COMP:9663"/>
        <dbReference type="Rhea" id="RHEA-COMP:9680"/>
        <dbReference type="ChEBI" id="CHEBI:29985"/>
        <dbReference type="ChEBI" id="CHEBI:30616"/>
        <dbReference type="ChEBI" id="CHEBI:33019"/>
        <dbReference type="ChEBI" id="CHEBI:78442"/>
        <dbReference type="ChEBI" id="CHEBI:78520"/>
        <dbReference type="ChEBI" id="CHEBI:456215"/>
        <dbReference type="EC" id="6.1.1.17"/>
    </reaction>
</comment>
<comment type="subunit">
    <text evidence="1">Monomer.</text>
</comment>
<comment type="subcellular location">
    <subcellularLocation>
        <location evidence="1">Cytoplasm</location>
    </subcellularLocation>
</comment>
<comment type="similarity">
    <text evidence="1">Belongs to the class-I aminoacyl-tRNA synthetase family. Glutamate--tRNA ligase type 1 subfamily.</text>
</comment>
<reference key="1">
    <citation type="journal article" date="2007" name="ISME J.">
        <title>Population level functional diversity in a microbial community revealed by comparative genomic and metagenomic analyses.</title>
        <authorList>
            <person name="Bhaya D."/>
            <person name="Grossman A.R."/>
            <person name="Steunou A.-S."/>
            <person name="Khuri N."/>
            <person name="Cohan F.M."/>
            <person name="Hamamura N."/>
            <person name="Melendrez M.C."/>
            <person name="Bateson M.M."/>
            <person name="Ward D.M."/>
            <person name="Heidelberg J.F."/>
        </authorList>
    </citation>
    <scope>NUCLEOTIDE SEQUENCE [LARGE SCALE GENOMIC DNA]</scope>
    <source>
        <strain>JA-3-3Ab</strain>
    </source>
</reference>
<proteinExistence type="inferred from homology"/>
<sequence length="479" mass="53595">MSVRVRLAPSPTGNLHIGTARTAVFNWLYARRHGGQFILRIEDTDRERSSPRYTRNILAGLAWLGLDWDEGPIYQSNRIARYQAVVQQLLDQGLAYRCYVSEVELEAMRAAQKAAGKAPRYDNRHRFLTEEQRRAYEAEGRQPVIRFKIEEPLEVSWVDLIRGPITWNTQDLGGDMVIARADGYPLYNLAVVVDDIDMGITHVIRGEDHIGNTPKQILLYRALGHEPPQFAHSPLILNPEGKKLSKRDGATSVAEFQQMGFLPEALKNYLALLSWSPPDGEEIFSLEKAATMFDFDRVNRAAARFDWNKLNWINSQYIKQLSPAELVERLTPFWQAAGFDLGSVPDPTWLEEVACLIAEGIDRLTEAPPLSRFLFQEPLSYSLPALEQLRLPGVAEAMAAMATTLAAAELPQPVSADSLKPLVEEVAKSQGMKKGLLLKSLRAALTGDLQGPDLMASFALLQRRGWALGRLEAVQKVVA</sequence>
<keyword id="KW-0030">Aminoacyl-tRNA synthetase</keyword>
<keyword id="KW-0067">ATP-binding</keyword>
<keyword id="KW-0963">Cytoplasm</keyword>
<keyword id="KW-0436">Ligase</keyword>
<keyword id="KW-0547">Nucleotide-binding</keyword>
<keyword id="KW-0648">Protein biosynthesis</keyword>